<organismHost>
    <name type="scientific">Ornithodoros</name>
    <name type="common">relapsing fever ticks</name>
    <dbReference type="NCBI Taxonomy" id="6937"/>
</organismHost>
<organismHost>
    <name type="scientific">Phacochoerus aethiopicus</name>
    <name type="common">Warthog</name>
    <dbReference type="NCBI Taxonomy" id="85517"/>
</organismHost>
<organismHost>
    <name type="scientific">Phacochoerus africanus</name>
    <name type="common">Warthog</name>
    <dbReference type="NCBI Taxonomy" id="41426"/>
</organismHost>
<organismHost>
    <name type="scientific">Potamochoerus larvatus</name>
    <name type="common">Bushpig</name>
    <dbReference type="NCBI Taxonomy" id="273792"/>
</organismHost>
<organismHost>
    <name type="scientific">Sus scrofa</name>
    <name type="common">Pig</name>
    <dbReference type="NCBI Taxonomy" id="9823"/>
</organismHost>
<keyword id="KW-0244">Early protein</keyword>
<keyword id="KW-0946">Virion</keyword>
<sequence>MSNESFPETLENLLSTLQTKQQNAIQSEVIEWLHNFCETFHLKIHCHKQFIPSGEKKRAKIPAQETQGNTQPSHHVHRIVLSRAQPVKAQESLLTTMCNGLVLDANTWTCLAIPPPAPFQQATRQVQHFYRNNFYEVVPIQDGTLLTIYYWDDPEHGPSWCLASTHGYDVSNYCWIGDKTFAELVYELLQQHSTCDVTLEKNKTRGTRLFFNNLNPDYCYTIGIRHHNLQPLIYDPQNIWAIQSTNLKTLKTVYPEYYGYIGIPGIQSQVPELPQYDLPYLIRSYKTAMNQAKNAIKNGKKDKGYFNYGYLLISRAPAITKSTSNVLLKSPLLVFLQKSVYQKKHNISNSQRLEFIILQNYLMQHFRDHFIALFPQYISYYTKYQNMLNMIINSIATKDKDHPFAGAVVKKVLEDIENAENIIDHTTIQNYVHQSKYAMLYLSIISHF</sequence>
<dbReference type="EMBL" id="AY261363">
    <property type="status" value="NOT_ANNOTATED_CDS"/>
    <property type="molecule type" value="Genomic_DNA"/>
</dbReference>
<dbReference type="SMR" id="P0CAH5"/>
<dbReference type="Proteomes" id="UP000000859">
    <property type="component" value="Segment"/>
</dbReference>
<dbReference type="GO" id="GO:0044423">
    <property type="term" value="C:virion component"/>
    <property type="evidence" value="ECO:0007669"/>
    <property type="project" value="UniProtKB-KW"/>
</dbReference>
<name>VF448_ASFP4</name>
<organism>
    <name type="scientific">African swine fever virus (isolate Tick/South Africa/Pretoriuskop Pr4/1996)</name>
    <name type="common">ASFV</name>
    <dbReference type="NCBI Taxonomy" id="561443"/>
    <lineage>
        <taxon>Viruses</taxon>
        <taxon>Varidnaviria</taxon>
        <taxon>Bamfordvirae</taxon>
        <taxon>Nucleocytoviricota</taxon>
        <taxon>Pokkesviricetes</taxon>
        <taxon>Asfuvirales</taxon>
        <taxon>Asfarviridae</taxon>
        <taxon>Asfivirus</taxon>
        <taxon>African swine fever virus</taxon>
    </lineage>
</organism>
<gene>
    <name type="ordered locus">Pret-073</name>
</gene>
<accession>P0CAH5</accession>
<evidence type="ECO:0000250" key="1">
    <source>
        <dbReference type="UniProtKB" id="Q65153"/>
    </source>
</evidence>
<evidence type="ECO:0000305" key="2"/>
<protein>
    <recommendedName>
        <fullName evidence="1">Putative RNA-ligase</fullName>
        <shortName>pM448R</shortName>
    </recommendedName>
</protein>
<proteinExistence type="inferred from homology"/>
<reference key="1">
    <citation type="submission" date="2003-03" db="EMBL/GenBank/DDBJ databases">
        <title>African swine fever virus genomes.</title>
        <authorList>
            <person name="Kutish G.F."/>
            <person name="Rock D.L."/>
        </authorList>
    </citation>
    <scope>NUCLEOTIDE SEQUENCE [LARGE SCALE GENOMIC DNA]</scope>
</reference>
<feature type="chain" id="PRO_0000373693" description="Putative RNA-ligase">
    <location>
        <begin position="1"/>
        <end position="448"/>
    </location>
</feature>
<comment type="subcellular location">
    <subcellularLocation>
        <location evidence="1">Virion</location>
    </subcellularLocation>
</comment>
<comment type="induction">
    <text evidence="2">Expressed in the early phase of the viral replicative cycle.</text>
</comment>
<comment type="similarity">
    <text evidence="2">Belongs to the asfivirus M448R family.</text>
</comment>